<comment type="function">
    <text evidence="1">Can catalyze the hydrolysis of ATP in the presence of single-stranded DNA, the ATP-dependent uptake of single-stranded DNA by duplex DNA, and the ATP-dependent hybridization of homologous single-stranded DNAs. It interacts with LexA causing its activation and leading to its autocatalytic cleavage.</text>
</comment>
<comment type="subcellular location">
    <subcellularLocation>
        <location evidence="1">Cytoplasm</location>
    </subcellularLocation>
</comment>
<comment type="similarity">
    <text evidence="1">Belongs to the RecA family.</text>
</comment>
<comment type="caution">
    <text evidence="3">Was originally thought to originate from Leptospira biflexa; taxonomy has been changed based on information in PubMed:11751822.</text>
</comment>
<name>RECA_LEPME</name>
<protein>
    <recommendedName>
        <fullName evidence="1">Protein RecA</fullName>
    </recommendedName>
    <alternativeName>
        <fullName evidence="1">Recombinase A</fullName>
    </alternativeName>
</protein>
<accession>P0C7T0</accession>
<accession>P48290</accession>
<accession>Q93CF0</accession>
<gene>
    <name evidence="1" type="primary">recA</name>
</gene>
<proteinExistence type="inferred from homology"/>
<organism>
    <name type="scientific">Leptospira meyeri</name>
    <dbReference type="NCBI Taxonomy" id="29508"/>
    <lineage>
        <taxon>Bacteria</taxon>
        <taxon>Pseudomonadati</taxon>
        <taxon>Spirochaetota</taxon>
        <taxon>Spirochaetia</taxon>
        <taxon>Leptospirales</taxon>
        <taxon>Leptospiraceae</taxon>
        <taxon>Leptospira</taxon>
    </lineage>
</organism>
<reference key="1">
    <citation type="journal article" date="1995" name="Gene">
        <title>Sequence of the Leptospira biflexa serovar patoc recA gene.</title>
        <authorList>
            <person name="Stamm L.V."/>
            <person name="Frye J.G."/>
            <person name="Hardham J.M."/>
        </authorList>
    </citation>
    <scope>NUCLEOTIDE SEQUENCE [GENOMIC DNA]</scope>
</reference>
<evidence type="ECO:0000255" key="1">
    <source>
        <dbReference type="HAMAP-Rule" id="MF_00268"/>
    </source>
</evidence>
<evidence type="ECO:0000256" key="2">
    <source>
        <dbReference type="SAM" id="MobiDB-lite"/>
    </source>
</evidence>
<evidence type="ECO:0000305" key="3">
    <source>
    </source>
</evidence>
<feature type="chain" id="PRO_0000122742" description="Protein RecA">
    <location>
        <begin position="1"/>
        <end position="387"/>
    </location>
</feature>
<feature type="region of interest" description="Disordered" evidence="2">
    <location>
        <begin position="350"/>
        <end position="387"/>
    </location>
</feature>
<feature type="compositionally biased region" description="Basic and acidic residues" evidence="2">
    <location>
        <begin position="350"/>
        <end position="369"/>
    </location>
</feature>
<feature type="binding site" evidence="1">
    <location>
        <begin position="78"/>
        <end position="85"/>
    </location>
    <ligand>
        <name>ATP</name>
        <dbReference type="ChEBI" id="CHEBI:30616"/>
    </ligand>
</feature>
<dbReference type="EMBL" id="U32625">
    <property type="protein sequence ID" value="AAC43586.1"/>
    <property type="molecule type" value="Genomic_DNA"/>
</dbReference>
<dbReference type="PIR" id="JC4578">
    <property type="entry name" value="JC4578"/>
</dbReference>
<dbReference type="RefSeq" id="WP_004784349.1">
    <property type="nucleotide sequence ID" value="NZ_SORO01000003.1"/>
</dbReference>
<dbReference type="SMR" id="P0C7T0"/>
<dbReference type="STRING" id="1193051.LEP1GSC017_0685"/>
<dbReference type="GeneID" id="79828734"/>
<dbReference type="OrthoDB" id="9776733at2"/>
<dbReference type="GO" id="GO:0005829">
    <property type="term" value="C:cytosol"/>
    <property type="evidence" value="ECO:0007669"/>
    <property type="project" value="TreeGrafter"/>
</dbReference>
<dbReference type="GO" id="GO:0005524">
    <property type="term" value="F:ATP binding"/>
    <property type="evidence" value="ECO:0007669"/>
    <property type="project" value="UniProtKB-UniRule"/>
</dbReference>
<dbReference type="GO" id="GO:0016887">
    <property type="term" value="F:ATP hydrolysis activity"/>
    <property type="evidence" value="ECO:0007669"/>
    <property type="project" value="InterPro"/>
</dbReference>
<dbReference type="GO" id="GO:0140664">
    <property type="term" value="F:ATP-dependent DNA damage sensor activity"/>
    <property type="evidence" value="ECO:0007669"/>
    <property type="project" value="InterPro"/>
</dbReference>
<dbReference type="GO" id="GO:0003684">
    <property type="term" value="F:damaged DNA binding"/>
    <property type="evidence" value="ECO:0007669"/>
    <property type="project" value="UniProtKB-UniRule"/>
</dbReference>
<dbReference type="GO" id="GO:0003697">
    <property type="term" value="F:single-stranded DNA binding"/>
    <property type="evidence" value="ECO:0007669"/>
    <property type="project" value="UniProtKB-UniRule"/>
</dbReference>
<dbReference type="GO" id="GO:0006310">
    <property type="term" value="P:DNA recombination"/>
    <property type="evidence" value="ECO:0007669"/>
    <property type="project" value="UniProtKB-UniRule"/>
</dbReference>
<dbReference type="GO" id="GO:0006281">
    <property type="term" value="P:DNA repair"/>
    <property type="evidence" value="ECO:0007669"/>
    <property type="project" value="UniProtKB-UniRule"/>
</dbReference>
<dbReference type="GO" id="GO:0009432">
    <property type="term" value="P:SOS response"/>
    <property type="evidence" value="ECO:0007669"/>
    <property type="project" value="UniProtKB-UniRule"/>
</dbReference>
<dbReference type="CDD" id="cd00983">
    <property type="entry name" value="RecA"/>
    <property type="match status" value="1"/>
</dbReference>
<dbReference type="FunFam" id="3.40.50.300:FF:000087">
    <property type="entry name" value="Recombinase RecA"/>
    <property type="match status" value="1"/>
</dbReference>
<dbReference type="Gene3D" id="3.40.50.300">
    <property type="entry name" value="P-loop containing nucleotide triphosphate hydrolases"/>
    <property type="match status" value="1"/>
</dbReference>
<dbReference type="HAMAP" id="MF_00268">
    <property type="entry name" value="RecA"/>
    <property type="match status" value="1"/>
</dbReference>
<dbReference type="InterPro" id="IPR003593">
    <property type="entry name" value="AAA+_ATPase"/>
</dbReference>
<dbReference type="InterPro" id="IPR013765">
    <property type="entry name" value="DNA_recomb/repair_RecA"/>
</dbReference>
<dbReference type="InterPro" id="IPR020584">
    <property type="entry name" value="DNA_recomb/repair_RecA_CS"/>
</dbReference>
<dbReference type="InterPro" id="IPR027417">
    <property type="entry name" value="P-loop_NTPase"/>
</dbReference>
<dbReference type="InterPro" id="IPR049261">
    <property type="entry name" value="RecA-like_C"/>
</dbReference>
<dbReference type="InterPro" id="IPR049428">
    <property type="entry name" value="RecA-like_N"/>
</dbReference>
<dbReference type="InterPro" id="IPR020588">
    <property type="entry name" value="RecA_ATP-bd"/>
</dbReference>
<dbReference type="InterPro" id="IPR023400">
    <property type="entry name" value="RecA_C_sf"/>
</dbReference>
<dbReference type="InterPro" id="IPR020587">
    <property type="entry name" value="RecA_monomer-monomer_interface"/>
</dbReference>
<dbReference type="NCBIfam" id="TIGR02012">
    <property type="entry name" value="tigrfam_recA"/>
    <property type="match status" value="1"/>
</dbReference>
<dbReference type="PANTHER" id="PTHR45900:SF1">
    <property type="entry name" value="MITOCHONDRIAL DNA REPAIR PROTEIN RECA HOMOLOG-RELATED"/>
    <property type="match status" value="1"/>
</dbReference>
<dbReference type="PANTHER" id="PTHR45900">
    <property type="entry name" value="RECA"/>
    <property type="match status" value="1"/>
</dbReference>
<dbReference type="Pfam" id="PF00154">
    <property type="entry name" value="RecA"/>
    <property type="match status" value="1"/>
</dbReference>
<dbReference type="Pfam" id="PF21096">
    <property type="entry name" value="RecA_C"/>
    <property type="match status" value="1"/>
</dbReference>
<dbReference type="PRINTS" id="PR00142">
    <property type="entry name" value="RECA"/>
</dbReference>
<dbReference type="SMART" id="SM00382">
    <property type="entry name" value="AAA"/>
    <property type="match status" value="1"/>
</dbReference>
<dbReference type="SUPFAM" id="SSF52540">
    <property type="entry name" value="P-loop containing nucleoside triphosphate hydrolases"/>
    <property type="match status" value="1"/>
</dbReference>
<dbReference type="SUPFAM" id="SSF54752">
    <property type="entry name" value="RecA protein, C-terminal domain"/>
    <property type="match status" value="1"/>
</dbReference>
<dbReference type="PROSITE" id="PS00321">
    <property type="entry name" value="RECA_1"/>
    <property type="match status" value="1"/>
</dbReference>
<dbReference type="PROSITE" id="PS50162">
    <property type="entry name" value="RECA_2"/>
    <property type="match status" value="1"/>
</dbReference>
<dbReference type="PROSITE" id="PS50163">
    <property type="entry name" value="RECA_3"/>
    <property type="match status" value="1"/>
</dbReference>
<sequence length="387" mass="42349">MKKEKADKAQEKETDQRKQAIDAALGQIEKQFGKGSIMRLGADTRMAEMNVVSTGSLDLDIALGIGGFPSGRIVEIYGPESSGKTTLTLSAIAETQKKGGIAAFIDAEHALDPSYAKKLGVNVDDLLVAQPDNGEEALEICESLVRSNAIDLIVIDSVAALVPKAEIEGDMGDSHMGLQARLMSQALRKLTGTISKSNTTVIFINQIRMKIGVMFGSPETTTGGNALKFYASIRLDIRRIETLKEKEEPVGNRVRVKVVKNKCAPPFRQAEFDIMYANGINRESSLIDLAVRHDLVAKAGSWYSYGGEKIGQGKEQVKNFFLENPDIAFKIENQVRDLNSLPLMDQSKIQTREVKSIERDPKETKETKSKQPVSFSTEAEVDIAVGE</sequence>
<keyword id="KW-0067">ATP-binding</keyword>
<keyword id="KW-0963">Cytoplasm</keyword>
<keyword id="KW-0227">DNA damage</keyword>
<keyword id="KW-0233">DNA recombination</keyword>
<keyword id="KW-0234">DNA repair</keyword>
<keyword id="KW-0238">DNA-binding</keyword>
<keyword id="KW-0547">Nucleotide-binding</keyword>
<keyword id="KW-0742">SOS response</keyword>